<comment type="function">
    <text evidence="1">Inhibits voltage-gated potassium channel.</text>
</comment>
<comment type="subcellular location">
    <subcellularLocation>
        <location evidence="5">Secreted</location>
    </subcellularLocation>
</comment>
<comment type="tissue specificity">
    <text evidence="5">Expressed by the venom gland.</text>
</comment>
<comment type="similarity">
    <text evidence="4">Belongs to the long chain scorpion toxin family. Class 1 subfamily.</text>
</comment>
<accession>P0CI49</accession>
<name>KBX11_LYCMC</name>
<dbReference type="EMBL" id="GT028816">
    <property type="status" value="NOT_ANNOTATED_CDS"/>
    <property type="molecule type" value="mRNA"/>
</dbReference>
<dbReference type="SMR" id="P0CI49"/>
<dbReference type="GO" id="GO:0005576">
    <property type="term" value="C:extracellular region"/>
    <property type="evidence" value="ECO:0007669"/>
    <property type="project" value="UniProtKB-SubCell"/>
</dbReference>
<dbReference type="GO" id="GO:0015459">
    <property type="term" value="F:potassium channel regulator activity"/>
    <property type="evidence" value="ECO:0007669"/>
    <property type="project" value="UniProtKB-KW"/>
</dbReference>
<dbReference type="GO" id="GO:0090729">
    <property type="term" value="F:toxin activity"/>
    <property type="evidence" value="ECO:0007669"/>
    <property type="project" value="UniProtKB-KW"/>
</dbReference>
<dbReference type="InterPro" id="IPR029237">
    <property type="entry name" value="Long_scorpion_toxin_alpha/beta"/>
</dbReference>
<dbReference type="Pfam" id="PF14866">
    <property type="entry name" value="Scorpion_toxin_alpha-beta"/>
    <property type="match status" value="1"/>
</dbReference>
<dbReference type="PROSITE" id="PS51862">
    <property type="entry name" value="BSPN_CSAB"/>
    <property type="match status" value="1"/>
</dbReference>
<sequence length="96" mass="10777">MQAKRTILLLLLLGMVALSSCGLREKHVQGLVNKFVPAGIVKNLLQAGIHKVAKMQYGCPIIKDYCSFHCNDLEKHEGYCHGTKCKCNIPNQYELF</sequence>
<proteinExistence type="inferred from homology"/>
<organism>
    <name type="scientific">Lychas mucronatus</name>
    <name type="common">Chinese swimming scorpion</name>
    <dbReference type="NCBI Taxonomy" id="172552"/>
    <lineage>
        <taxon>Eukaryota</taxon>
        <taxon>Metazoa</taxon>
        <taxon>Ecdysozoa</taxon>
        <taxon>Arthropoda</taxon>
        <taxon>Chelicerata</taxon>
        <taxon>Arachnida</taxon>
        <taxon>Scorpiones</taxon>
        <taxon>Buthida</taxon>
        <taxon>Buthoidea</taxon>
        <taxon>Buthidae</taxon>
        <taxon>Lychas</taxon>
    </lineage>
</organism>
<keyword id="KW-1015">Disulfide bond</keyword>
<keyword id="KW-0872">Ion channel impairing toxin</keyword>
<keyword id="KW-0632">Potassium channel impairing toxin</keyword>
<keyword id="KW-0964">Secreted</keyword>
<keyword id="KW-0732">Signal</keyword>
<keyword id="KW-0800">Toxin</keyword>
<keyword id="KW-1220">Voltage-gated potassium channel impairing toxin</keyword>
<reference key="1">
    <citation type="journal article" date="2010" name="BMC Genomics">
        <title>Comparative venom gland transcriptome analysis of the scorpion Lychas mucronatus reveals intraspecific toxic gene diversity and new venomous components.</title>
        <authorList>
            <person name="Zhao R."/>
            <person name="Ma Y."/>
            <person name="He Y."/>
            <person name="Di Z."/>
            <person name="Wu Y.-L."/>
            <person name="Cao Z.-J."/>
            <person name="Li W.-X."/>
        </authorList>
    </citation>
    <scope>NUCLEOTIDE SEQUENCE [MRNA]</scope>
    <source>
        <strain>Yunnan</strain>
        <tissue>Venom gland</tissue>
    </source>
</reference>
<protein>
    <recommendedName>
        <fullName>Neurotoxin beta-KTx 31.1</fullName>
    </recommendedName>
</protein>
<evidence type="ECO:0000250" key="1">
    <source>
        <dbReference type="UniProtKB" id="P69940"/>
    </source>
</evidence>
<evidence type="ECO:0000255" key="2"/>
<evidence type="ECO:0000255" key="3">
    <source>
        <dbReference type="PROSITE-ProRule" id="PRU01209"/>
    </source>
</evidence>
<evidence type="ECO:0000305" key="4"/>
<evidence type="ECO:0000305" key="5">
    <source>
    </source>
</evidence>
<feature type="signal peptide" evidence="2">
    <location>
        <begin position="1"/>
        <end position="21"/>
    </location>
</feature>
<feature type="propeptide" id="PRO_0000403842" evidence="4">
    <location>
        <begin position="22"/>
        <end position="29"/>
    </location>
</feature>
<feature type="chain" id="PRO_0000403843" description="Neurotoxin beta-KTx 31.1">
    <location>
        <begin position="30"/>
        <end position="96"/>
    </location>
</feature>
<feature type="domain" description="BetaSPN-type CS-alpha/beta" evidence="3">
    <location>
        <begin position="56"/>
        <end position="93"/>
    </location>
</feature>
<feature type="disulfide bond" evidence="3">
    <location>
        <begin position="59"/>
        <end position="80"/>
    </location>
</feature>
<feature type="disulfide bond" evidence="3">
    <location>
        <begin position="66"/>
        <end position="85"/>
    </location>
</feature>
<feature type="disulfide bond" evidence="3">
    <location>
        <begin position="70"/>
        <end position="87"/>
    </location>
</feature>